<keyword id="KW-0028">Amino-acid biosynthesis</keyword>
<keyword id="KW-0032">Aminotransferase</keyword>
<keyword id="KW-0368">Histidine biosynthesis</keyword>
<keyword id="KW-0663">Pyridoxal phosphate</keyword>
<keyword id="KW-0808">Transferase</keyword>
<feature type="chain" id="PRO_1000063465" description="Histidinol-phosphate aminotransferase">
    <location>
        <begin position="1"/>
        <end position="366"/>
    </location>
</feature>
<feature type="modified residue" description="N6-(pyridoxal phosphate)lysine" evidence="1">
    <location>
        <position position="228"/>
    </location>
</feature>
<reference key="1">
    <citation type="submission" date="2006-11" db="EMBL/GenBank/DDBJ databases">
        <title>Sequence of Campylobacter fetus subsp. fetus 82-40.</title>
        <authorList>
            <person name="Fouts D.E."/>
            <person name="Nelson K.E."/>
        </authorList>
    </citation>
    <scope>NUCLEOTIDE SEQUENCE [LARGE SCALE GENOMIC DNA]</scope>
    <source>
        <strain>82-40</strain>
    </source>
</reference>
<comment type="catalytic activity">
    <reaction evidence="1">
        <text>L-histidinol phosphate + 2-oxoglutarate = 3-(imidazol-4-yl)-2-oxopropyl phosphate + L-glutamate</text>
        <dbReference type="Rhea" id="RHEA:23744"/>
        <dbReference type="ChEBI" id="CHEBI:16810"/>
        <dbReference type="ChEBI" id="CHEBI:29985"/>
        <dbReference type="ChEBI" id="CHEBI:57766"/>
        <dbReference type="ChEBI" id="CHEBI:57980"/>
        <dbReference type="EC" id="2.6.1.9"/>
    </reaction>
</comment>
<comment type="cofactor">
    <cofactor evidence="1">
        <name>pyridoxal 5'-phosphate</name>
        <dbReference type="ChEBI" id="CHEBI:597326"/>
    </cofactor>
</comment>
<comment type="pathway">
    <text evidence="1">Amino-acid biosynthesis; L-histidine biosynthesis; L-histidine from 5-phospho-alpha-D-ribose 1-diphosphate: step 7/9.</text>
</comment>
<comment type="subunit">
    <text evidence="1">Homodimer.</text>
</comment>
<comment type="similarity">
    <text evidence="1">Belongs to the class-II pyridoxal-phosphate-dependent aminotransferase family. Histidinol-phosphate aminotransferase subfamily.</text>
</comment>
<organism>
    <name type="scientific">Campylobacter fetus subsp. fetus (strain 82-40)</name>
    <dbReference type="NCBI Taxonomy" id="360106"/>
    <lineage>
        <taxon>Bacteria</taxon>
        <taxon>Pseudomonadati</taxon>
        <taxon>Campylobacterota</taxon>
        <taxon>Epsilonproteobacteria</taxon>
        <taxon>Campylobacterales</taxon>
        <taxon>Campylobacteraceae</taxon>
        <taxon>Campylobacter</taxon>
    </lineage>
</organism>
<name>HIS8_CAMFF</name>
<accession>A0RMN9</accession>
<dbReference type="EC" id="2.6.1.9" evidence="1"/>
<dbReference type="EMBL" id="CP000487">
    <property type="protein sequence ID" value="ABK81751.1"/>
    <property type="molecule type" value="Genomic_DNA"/>
</dbReference>
<dbReference type="RefSeq" id="WP_011731759.1">
    <property type="nucleotide sequence ID" value="NC_008599.1"/>
</dbReference>
<dbReference type="SMR" id="A0RMN9"/>
<dbReference type="GeneID" id="61064112"/>
<dbReference type="KEGG" id="cff:CFF8240_0268"/>
<dbReference type="PATRIC" id="fig|360106.6.peg.263"/>
<dbReference type="eggNOG" id="COG0079">
    <property type="taxonomic scope" value="Bacteria"/>
</dbReference>
<dbReference type="HOGENOM" id="CLU_017584_3_3_7"/>
<dbReference type="UniPathway" id="UPA00031">
    <property type="reaction ID" value="UER00012"/>
</dbReference>
<dbReference type="Proteomes" id="UP000000760">
    <property type="component" value="Chromosome"/>
</dbReference>
<dbReference type="GO" id="GO:0004400">
    <property type="term" value="F:histidinol-phosphate transaminase activity"/>
    <property type="evidence" value="ECO:0007669"/>
    <property type="project" value="UniProtKB-UniRule"/>
</dbReference>
<dbReference type="GO" id="GO:0030170">
    <property type="term" value="F:pyridoxal phosphate binding"/>
    <property type="evidence" value="ECO:0007669"/>
    <property type="project" value="InterPro"/>
</dbReference>
<dbReference type="GO" id="GO:0000105">
    <property type="term" value="P:L-histidine biosynthetic process"/>
    <property type="evidence" value="ECO:0007669"/>
    <property type="project" value="UniProtKB-UniRule"/>
</dbReference>
<dbReference type="CDD" id="cd00609">
    <property type="entry name" value="AAT_like"/>
    <property type="match status" value="1"/>
</dbReference>
<dbReference type="Gene3D" id="3.90.1150.10">
    <property type="entry name" value="Aspartate Aminotransferase, domain 1"/>
    <property type="match status" value="1"/>
</dbReference>
<dbReference type="Gene3D" id="3.40.640.10">
    <property type="entry name" value="Type I PLP-dependent aspartate aminotransferase-like (Major domain)"/>
    <property type="match status" value="1"/>
</dbReference>
<dbReference type="HAMAP" id="MF_01023">
    <property type="entry name" value="HisC_aminotrans_2"/>
    <property type="match status" value="1"/>
</dbReference>
<dbReference type="InterPro" id="IPR001917">
    <property type="entry name" value="Aminotrans_II_pyridoxalP_BS"/>
</dbReference>
<dbReference type="InterPro" id="IPR004839">
    <property type="entry name" value="Aminotransferase_I/II_large"/>
</dbReference>
<dbReference type="InterPro" id="IPR005861">
    <property type="entry name" value="HisP_aminotrans"/>
</dbReference>
<dbReference type="InterPro" id="IPR050106">
    <property type="entry name" value="HistidinolP_aminotransfase"/>
</dbReference>
<dbReference type="InterPro" id="IPR015424">
    <property type="entry name" value="PyrdxlP-dep_Trfase"/>
</dbReference>
<dbReference type="InterPro" id="IPR015421">
    <property type="entry name" value="PyrdxlP-dep_Trfase_major"/>
</dbReference>
<dbReference type="InterPro" id="IPR015422">
    <property type="entry name" value="PyrdxlP-dep_Trfase_small"/>
</dbReference>
<dbReference type="NCBIfam" id="TIGR01141">
    <property type="entry name" value="hisC"/>
    <property type="match status" value="1"/>
</dbReference>
<dbReference type="PANTHER" id="PTHR43643:SF3">
    <property type="entry name" value="HISTIDINOL-PHOSPHATE AMINOTRANSFERASE"/>
    <property type="match status" value="1"/>
</dbReference>
<dbReference type="PANTHER" id="PTHR43643">
    <property type="entry name" value="HISTIDINOL-PHOSPHATE AMINOTRANSFERASE 2"/>
    <property type="match status" value="1"/>
</dbReference>
<dbReference type="Pfam" id="PF00155">
    <property type="entry name" value="Aminotran_1_2"/>
    <property type="match status" value="1"/>
</dbReference>
<dbReference type="SUPFAM" id="SSF53383">
    <property type="entry name" value="PLP-dependent transferases"/>
    <property type="match status" value="1"/>
</dbReference>
<dbReference type="PROSITE" id="PS00599">
    <property type="entry name" value="AA_TRANSFER_CLASS_2"/>
    <property type="match status" value="1"/>
</dbReference>
<gene>
    <name evidence="1" type="primary">hisC</name>
    <name type="ordered locus">CFF8240_0268</name>
</gene>
<proteinExistence type="inferred from homology"/>
<sequence length="366" mass="41581">MKFNSHIENLPIYEAGKPIELVIREFGIDQNDIIKLASNENPLGTSKKVIEKIKNVAQNSSLYPDDSYYELKDGLSNLYKVEPKNVIIGSGSDQIIEFALHAKANEKKGILVSGVTFAMYEIYAKHVGAKIYKTKSKEHNLAEFREIYRTNKNDISVIFLCLPNNPLGECLDADEVFSFIKDVSEDTLVVIDGAYMEFAKFKSSKKEIDPKTLIQTFSNALYLGTFSKAYGLGGMRVGYGIANEEIIKALHRLRAPFNITTLSLAAAIEALKDNDFLKETLENNFKEMKVYEEFAKENSIEFIESYTNFITFIFDQHQNATKICDNLLKQGIILRNLKSYSMNAIRITIGKNEQNRRVLDMLKKEI</sequence>
<evidence type="ECO:0000255" key="1">
    <source>
        <dbReference type="HAMAP-Rule" id="MF_01023"/>
    </source>
</evidence>
<protein>
    <recommendedName>
        <fullName evidence="1">Histidinol-phosphate aminotransferase</fullName>
        <ecNumber evidence="1">2.6.1.9</ecNumber>
    </recommendedName>
    <alternativeName>
        <fullName evidence="1">Imidazole acetol-phosphate transaminase</fullName>
    </alternativeName>
</protein>